<accession>P35310</accession>
<proteinExistence type="evidence at transcript level"/>
<dbReference type="EMBL" id="L14589">
    <property type="protein sequence ID" value="AAA36946.1"/>
    <property type="molecule type" value="Genomic_DNA"/>
</dbReference>
<dbReference type="EMBL" id="AF215710">
    <property type="protein sequence ID" value="AAF34623.1"/>
    <property type="molecule type" value="Genomic_DNA"/>
</dbReference>
<dbReference type="RefSeq" id="XP_054309606.1">
    <property type="nucleotide sequence ID" value="XM_054453631.2"/>
</dbReference>
<dbReference type="GeneID" id="129015523"/>
<dbReference type="GO" id="GO:0000786">
    <property type="term" value="C:nucleosome"/>
    <property type="evidence" value="ECO:0007669"/>
    <property type="project" value="UniProtKB-KW"/>
</dbReference>
<dbReference type="GO" id="GO:0005634">
    <property type="term" value="C:nucleus"/>
    <property type="evidence" value="ECO:0007669"/>
    <property type="project" value="UniProtKB-SubCell"/>
</dbReference>
<dbReference type="GO" id="GO:0003677">
    <property type="term" value="F:DNA binding"/>
    <property type="evidence" value="ECO:0007669"/>
    <property type="project" value="UniProtKB-KW"/>
</dbReference>
<dbReference type="GO" id="GO:0030261">
    <property type="term" value="P:chromosome condensation"/>
    <property type="evidence" value="ECO:0007669"/>
    <property type="project" value="UniProtKB-KW"/>
</dbReference>
<dbReference type="GO" id="GO:0035092">
    <property type="term" value="P:sperm DNA condensation"/>
    <property type="evidence" value="ECO:0007669"/>
    <property type="project" value="InterPro"/>
</dbReference>
<dbReference type="InterPro" id="IPR000221">
    <property type="entry name" value="Protamine_P1"/>
</dbReference>
<dbReference type="Pfam" id="PF00260">
    <property type="entry name" value="Protamine_P1"/>
    <property type="match status" value="1"/>
</dbReference>
<dbReference type="PROSITE" id="PS00048">
    <property type="entry name" value="PROTAMINE_P1"/>
    <property type="match status" value="1"/>
</dbReference>
<sequence>MARYRCCRSQSQSRCCRRRQRCHRRRRRCCQTRRRAMRCCRRRYRLRCRRH</sequence>
<feature type="chain" id="PRO_0000191540" description="Sperm protamine P1">
    <location>
        <begin position="1"/>
        <end position="51"/>
    </location>
</feature>
<organism>
    <name type="scientific">Pongo pygmaeus</name>
    <name type="common">Bornean orangutan</name>
    <dbReference type="NCBI Taxonomy" id="9600"/>
    <lineage>
        <taxon>Eukaryota</taxon>
        <taxon>Metazoa</taxon>
        <taxon>Chordata</taxon>
        <taxon>Craniata</taxon>
        <taxon>Vertebrata</taxon>
        <taxon>Euteleostomi</taxon>
        <taxon>Mammalia</taxon>
        <taxon>Eutheria</taxon>
        <taxon>Euarchontoglires</taxon>
        <taxon>Primates</taxon>
        <taxon>Haplorrhini</taxon>
        <taxon>Catarrhini</taxon>
        <taxon>Hominidae</taxon>
        <taxon>Pongo</taxon>
    </lineage>
</organism>
<evidence type="ECO:0000250" key="1"/>
<evidence type="ECO:0000305" key="2"/>
<comment type="function">
    <text>Protamines substitute for histones in the chromatin of sperm during the haploid phase of spermatogenesis. They compact sperm DNA into a highly condensed, stable and inactive complex.</text>
</comment>
<comment type="subunit">
    <text evidence="1">Cross-linked by interchain disulfide bonds around the DNA-helix.</text>
</comment>
<comment type="subcellular location">
    <subcellularLocation>
        <location>Nucleus</location>
    </subcellularLocation>
    <subcellularLocation>
        <location>Chromosome</location>
    </subcellularLocation>
</comment>
<comment type="tissue specificity">
    <text>Testis.</text>
</comment>
<comment type="similarity">
    <text evidence="2">Belongs to the protamine P1 family.</text>
</comment>
<keyword id="KW-0158">Chromosome</keyword>
<keyword id="KW-0217">Developmental protein</keyword>
<keyword id="KW-0221">Differentiation</keyword>
<keyword id="KW-1015">Disulfide bond</keyword>
<keyword id="KW-0226">DNA condensation</keyword>
<keyword id="KW-0238">DNA-binding</keyword>
<keyword id="KW-0544">Nucleosome core</keyword>
<keyword id="KW-0539">Nucleus</keyword>
<keyword id="KW-0744">Spermatogenesis</keyword>
<name>HSP1_PONPY</name>
<reference key="1">
    <citation type="journal article" date="1993" name="J. Mol. Evol.">
        <title>Evolution of protamine P1 genes in primates.</title>
        <authorList>
            <person name="Retief J.D."/>
            <person name="Winkfein R.J."/>
            <person name="Dixon G.H."/>
            <person name="Adroer R."/>
            <person name="Queralt R."/>
            <person name="Ballabriga J."/>
            <person name="Oliva R."/>
        </authorList>
    </citation>
    <scope>NUCLEOTIDE SEQUENCE [GENOMIC DNA]</scope>
</reference>
<reference key="2">
    <citation type="journal article" date="2000" name="Nature">
        <title>Rapid evolution of male reproductive genes in the descent of man.</title>
        <authorList>
            <person name="Wyckoff G.J."/>
            <person name="Wang W."/>
            <person name="Wu C.-I."/>
        </authorList>
    </citation>
    <scope>NUCLEOTIDE SEQUENCE [GENOMIC DNA]</scope>
</reference>
<gene>
    <name type="primary">PRM1</name>
</gene>
<protein>
    <recommendedName>
        <fullName>Sperm protamine P1</fullName>
    </recommendedName>
    <alternativeName>
        <fullName>Cysteine-rich protamine</fullName>
    </alternativeName>
</protein>